<sequence length="177" mass="19714">MSELSTVARPYAKAAFDFALEQGQLDKWQEMLQFSAFVAENEQVAEYINSSLASGQISETFIKICGDQLDQYGQNFIRVMAENKRLAVLPMVFDTFVSLRAEHEAVKDVTIFSANELSQAQEDKIAKAMEKRLGQKVRLTNQIDNSLIAGVIIKYDDVVIDGSSRGQLNRLASALSL</sequence>
<evidence type="ECO:0000255" key="1">
    <source>
        <dbReference type="HAMAP-Rule" id="MF_01416"/>
    </source>
</evidence>
<accession>B3H2P6</accession>
<name>ATPD_ACTP7</name>
<reference key="1">
    <citation type="submission" date="2008-06" db="EMBL/GenBank/DDBJ databases">
        <title>Genome and proteome analysis of A. pleuropneumoniae serotype 7.</title>
        <authorList>
            <person name="Linke B."/>
            <person name="Buettner F."/>
            <person name="Martinez-Arias R."/>
            <person name="Goesmann A."/>
            <person name="Baltes N."/>
            <person name="Tegetmeyer H."/>
            <person name="Singh M."/>
            <person name="Gerlach G.F."/>
        </authorList>
    </citation>
    <scope>NUCLEOTIDE SEQUENCE [LARGE SCALE GENOMIC DNA]</scope>
    <source>
        <strain>AP76</strain>
    </source>
</reference>
<feature type="chain" id="PRO_1000184636" description="ATP synthase subunit delta">
    <location>
        <begin position="1"/>
        <end position="177"/>
    </location>
</feature>
<protein>
    <recommendedName>
        <fullName evidence="1">ATP synthase subunit delta</fullName>
    </recommendedName>
    <alternativeName>
        <fullName evidence="1">ATP synthase F(1) sector subunit delta</fullName>
    </alternativeName>
    <alternativeName>
        <fullName evidence="1">F-type ATPase subunit delta</fullName>
        <shortName evidence="1">F-ATPase subunit delta</shortName>
    </alternativeName>
</protein>
<organism>
    <name type="scientific">Actinobacillus pleuropneumoniae serotype 7 (strain AP76)</name>
    <dbReference type="NCBI Taxonomy" id="537457"/>
    <lineage>
        <taxon>Bacteria</taxon>
        <taxon>Pseudomonadati</taxon>
        <taxon>Pseudomonadota</taxon>
        <taxon>Gammaproteobacteria</taxon>
        <taxon>Pasteurellales</taxon>
        <taxon>Pasteurellaceae</taxon>
        <taxon>Actinobacillus</taxon>
    </lineage>
</organism>
<comment type="function">
    <text evidence="1">F(1)F(0) ATP synthase produces ATP from ADP in the presence of a proton or sodium gradient. F-type ATPases consist of two structural domains, F(1) containing the extramembraneous catalytic core and F(0) containing the membrane proton channel, linked together by a central stalk and a peripheral stalk. During catalysis, ATP synthesis in the catalytic domain of F(1) is coupled via a rotary mechanism of the central stalk subunits to proton translocation.</text>
</comment>
<comment type="function">
    <text evidence="1">This protein is part of the stalk that links CF(0) to CF(1). It either transmits conformational changes from CF(0) to CF(1) or is implicated in proton conduction.</text>
</comment>
<comment type="subunit">
    <text evidence="1">F-type ATPases have 2 components, F(1) - the catalytic core - and F(0) - the membrane proton channel. F(1) has five subunits: alpha(3), beta(3), gamma(1), delta(1), epsilon(1). F(0) has three main subunits: a(1), b(2) and c(10-14). The alpha and beta chains form an alternating ring which encloses part of the gamma chain. F(1) is attached to F(0) by a central stalk formed by the gamma and epsilon chains, while a peripheral stalk is formed by the delta and b chains.</text>
</comment>
<comment type="subcellular location">
    <subcellularLocation>
        <location evidence="1">Cell inner membrane</location>
        <topology evidence="1">Peripheral membrane protein</topology>
    </subcellularLocation>
</comment>
<comment type="similarity">
    <text evidence="1">Belongs to the ATPase delta chain family.</text>
</comment>
<dbReference type="EMBL" id="CP001091">
    <property type="protein sequence ID" value="ACE62363.1"/>
    <property type="molecule type" value="Genomic_DNA"/>
</dbReference>
<dbReference type="RefSeq" id="WP_005602403.1">
    <property type="nucleotide sequence ID" value="NC_010939.1"/>
</dbReference>
<dbReference type="SMR" id="B3H2P6"/>
<dbReference type="KEGG" id="apa:APP7_1711"/>
<dbReference type="HOGENOM" id="CLU_085114_3_0_6"/>
<dbReference type="Proteomes" id="UP000001226">
    <property type="component" value="Chromosome"/>
</dbReference>
<dbReference type="GO" id="GO:0005886">
    <property type="term" value="C:plasma membrane"/>
    <property type="evidence" value="ECO:0007669"/>
    <property type="project" value="UniProtKB-SubCell"/>
</dbReference>
<dbReference type="GO" id="GO:0045259">
    <property type="term" value="C:proton-transporting ATP synthase complex"/>
    <property type="evidence" value="ECO:0007669"/>
    <property type="project" value="UniProtKB-KW"/>
</dbReference>
<dbReference type="GO" id="GO:0046933">
    <property type="term" value="F:proton-transporting ATP synthase activity, rotational mechanism"/>
    <property type="evidence" value="ECO:0007669"/>
    <property type="project" value="UniProtKB-UniRule"/>
</dbReference>
<dbReference type="Gene3D" id="1.10.520.20">
    <property type="entry name" value="N-terminal domain of the delta subunit of the F1F0-ATP synthase"/>
    <property type="match status" value="1"/>
</dbReference>
<dbReference type="HAMAP" id="MF_01416">
    <property type="entry name" value="ATP_synth_delta_bact"/>
    <property type="match status" value="1"/>
</dbReference>
<dbReference type="InterPro" id="IPR026015">
    <property type="entry name" value="ATP_synth_OSCP/delta_N_sf"/>
</dbReference>
<dbReference type="InterPro" id="IPR000711">
    <property type="entry name" value="ATPase_OSCP/dsu"/>
</dbReference>
<dbReference type="NCBIfam" id="TIGR01145">
    <property type="entry name" value="ATP_synt_delta"/>
    <property type="match status" value="1"/>
</dbReference>
<dbReference type="NCBIfam" id="NF004402">
    <property type="entry name" value="PRK05758.2-2"/>
    <property type="match status" value="1"/>
</dbReference>
<dbReference type="NCBIfam" id="NF004404">
    <property type="entry name" value="PRK05758.2-5"/>
    <property type="match status" value="1"/>
</dbReference>
<dbReference type="PANTHER" id="PTHR11910">
    <property type="entry name" value="ATP SYNTHASE DELTA CHAIN"/>
    <property type="match status" value="1"/>
</dbReference>
<dbReference type="Pfam" id="PF00213">
    <property type="entry name" value="OSCP"/>
    <property type="match status" value="1"/>
</dbReference>
<dbReference type="PRINTS" id="PR00125">
    <property type="entry name" value="ATPASEDELTA"/>
</dbReference>
<dbReference type="SUPFAM" id="SSF47928">
    <property type="entry name" value="N-terminal domain of the delta subunit of the F1F0-ATP synthase"/>
    <property type="match status" value="1"/>
</dbReference>
<keyword id="KW-0066">ATP synthesis</keyword>
<keyword id="KW-0997">Cell inner membrane</keyword>
<keyword id="KW-1003">Cell membrane</keyword>
<keyword id="KW-0139">CF(1)</keyword>
<keyword id="KW-0375">Hydrogen ion transport</keyword>
<keyword id="KW-0406">Ion transport</keyword>
<keyword id="KW-0472">Membrane</keyword>
<keyword id="KW-0813">Transport</keyword>
<gene>
    <name evidence="1" type="primary">atpH</name>
    <name type="ordered locus">APP7_1711</name>
</gene>
<proteinExistence type="inferred from homology"/>